<organism>
    <name type="scientific">Homo sapiens</name>
    <name type="common">Human</name>
    <dbReference type="NCBI Taxonomy" id="9606"/>
    <lineage>
        <taxon>Eukaryota</taxon>
        <taxon>Metazoa</taxon>
        <taxon>Chordata</taxon>
        <taxon>Craniata</taxon>
        <taxon>Vertebrata</taxon>
        <taxon>Euteleostomi</taxon>
        <taxon>Mammalia</taxon>
        <taxon>Eutheria</taxon>
        <taxon>Euarchontoglires</taxon>
        <taxon>Primates</taxon>
        <taxon>Haplorrhini</taxon>
        <taxon>Catarrhini</taxon>
        <taxon>Hominidae</taxon>
        <taxon>Homo</taxon>
    </lineage>
</organism>
<accession>P98155</accession>
<accession>B2RMZ7</accession>
<accession>D3DRH6</accession>
<accession>Q5VVF6</accession>
<keyword id="KW-0002">3D-structure</keyword>
<keyword id="KW-0025">Alternative splicing</keyword>
<keyword id="KW-1003">Cell membrane</keyword>
<keyword id="KW-0153">Cholesterol metabolism</keyword>
<keyword id="KW-0168">Coated pit</keyword>
<keyword id="KW-1015">Disulfide bond</keyword>
<keyword id="KW-0245">EGF-like domain</keyword>
<keyword id="KW-0254">Endocytosis</keyword>
<keyword id="KW-0325">Glycoprotein</keyword>
<keyword id="KW-0945">Host-virus interaction</keyword>
<keyword id="KW-0991">Intellectual disability</keyword>
<keyword id="KW-1017">Isopeptide bond</keyword>
<keyword id="KW-0443">Lipid metabolism</keyword>
<keyword id="KW-0445">Lipid transport</keyword>
<keyword id="KW-0472">Membrane</keyword>
<keyword id="KW-1267">Proteomics identification</keyword>
<keyword id="KW-0675">Receptor</keyword>
<keyword id="KW-1185">Reference proteome</keyword>
<keyword id="KW-0677">Repeat</keyword>
<keyword id="KW-0732">Signal</keyword>
<keyword id="KW-0753">Steroid metabolism</keyword>
<keyword id="KW-1207">Sterol metabolism</keyword>
<keyword id="KW-0812">Transmembrane</keyword>
<keyword id="KW-1133">Transmembrane helix</keyword>
<keyword id="KW-0813">Transport</keyword>
<keyword id="KW-0832">Ubl conjugation</keyword>
<keyword id="KW-0850">VLDL</keyword>
<reference key="1">
    <citation type="journal article" date="1993" name="Somat. Cell Mol. Genet.">
        <title>Cloning of a cDNA encoding a putative human very low density lipoprotein/apolipoprotein E receptor and assignment of the gene to chromosome 9pter-p23.</title>
        <authorList>
            <person name="Gafvels M.E."/>
            <person name="Caird M."/>
            <person name="Britt D."/>
            <person name="Jackson C.L."/>
            <person name="Patterson D."/>
            <person name="Strauss J.F."/>
        </authorList>
    </citation>
    <scope>NUCLEOTIDE SEQUENCE [MRNA]</scope>
    <source>
        <tissue>Skeletal muscle</tissue>
    </source>
</reference>
<reference key="2">
    <citation type="journal article" date="1994" name="Hum. Mol. Genet.">
        <title>Characterization and tissue-specific expression of the human 'very low density lipoprotein (VLDL) receptor' mRNA.</title>
        <authorList>
            <person name="Webb J.C."/>
            <person name="Patel D.D."/>
            <person name="Jones M.D."/>
            <person name="Knight B.L."/>
            <person name="Soutar A.K."/>
        </authorList>
    </citation>
    <scope>NUCLEOTIDE SEQUENCE [MRNA]</scope>
    <source>
        <tissue>Heart</tissue>
    </source>
</reference>
<reference key="3">
    <citation type="journal article" date="1994" name="J. Biol. Chem.">
        <title>Structure, chromosome location, and expression of the human very low density lipoprotein receptor gene.</title>
        <authorList>
            <person name="Sakai J."/>
            <person name="Hoshino A."/>
            <person name="Takahashi S."/>
            <person name="Miura Y."/>
            <person name="Ishii H."/>
            <person name="Suzuki H."/>
            <person name="Kawarabayasi Y."/>
            <person name="Yamamoto T."/>
        </authorList>
    </citation>
    <scope>NUCLEOTIDE SEQUENCE [GENOMIC DNA / MRNA]</scope>
</reference>
<reference key="4">
    <citation type="journal article" date="1994" name="Genomics">
        <title>Human very-low-density lipoprotein receptor complementary DNA and deduced amino acid sequence and localization of its gene (VLDLR) to chromosome band 9p24 by fluorescence in situ hybridization.</title>
        <authorList>
            <person name="Oka K."/>
            <person name="Tzung K.W."/>
            <person name="Sullivan M."/>
            <person name="Lindsay E."/>
            <person name="Baldini A."/>
            <person name="Chan L."/>
        </authorList>
    </citation>
    <scope>NUCLEOTIDE SEQUENCE [MRNA]</scope>
    <source>
        <tissue>Heart</tissue>
    </source>
</reference>
<reference key="5">
    <citation type="submission" date="2005-05" db="EMBL/GenBank/DDBJ databases">
        <authorList>
            <consortium name="SeattleSNPs variation discovery resource"/>
        </authorList>
    </citation>
    <scope>NUCLEOTIDE SEQUENCE [GENOMIC DNA]</scope>
    <scope>VARIANTS ILE-59; HIS-262; ILE-464; VAL-561; HIS-613 AND ILE-791</scope>
</reference>
<reference key="6">
    <citation type="journal article" date="2004" name="Nature">
        <title>DNA sequence and analysis of human chromosome 9.</title>
        <authorList>
            <person name="Humphray S.J."/>
            <person name="Oliver K."/>
            <person name="Hunt A.R."/>
            <person name="Plumb R.W."/>
            <person name="Loveland J.E."/>
            <person name="Howe K.L."/>
            <person name="Andrews T.D."/>
            <person name="Searle S."/>
            <person name="Hunt S.E."/>
            <person name="Scott C.E."/>
            <person name="Jones M.C."/>
            <person name="Ainscough R."/>
            <person name="Almeida J.P."/>
            <person name="Ambrose K.D."/>
            <person name="Ashwell R.I.S."/>
            <person name="Babbage A.K."/>
            <person name="Babbage S."/>
            <person name="Bagguley C.L."/>
            <person name="Bailey J."/>
            <person name="Banerjee R."/>
            <person name="Barker D.J."/>
            <person name="Barlow K.F."/>
            <person name="Bates K."/>
            <person name="Beasley H."/>
            <person name="Beasley O."/>
            <person name="Bird C.P."/>
            <person name="Bray-Allen S."/>
            <person name="Brown A.J."/>
            <person name="Brown J.Y."/>
            <person name="Burford D."/>
            <person name="Burrill W."/>
            <person name="Burton J."/>
            <person name="Carder C."/>
            <person name="Carter N.P."/>
            <person name="Chapman J.C."/>
            <person name="Chen Y."/>
            <person name="Clarke G."/>
            <person name="Clark S.Y."/>
            <person name="Clee C.M."/>
            <person name="Clegg S."/>
            <person name="Collier R.E."/>
            <person name="Corby N."/>
            <person name="Crosier M."/>
            <person name="Cummings A.T."/>
            <person name="Davies J."/>
            <person name="Dhami P."/>
            <person name="Dunn M."/>
            <person name="Dutta I."/>
            <person name="Dyer L.W."/>
            <person name="Earthrowl M.E."/>
            <person name="Faulkner L."/>
            <person name="Fleming C.J."/>
            <person name="Frankish A."/>
            <person name="Frankland J.A."/>
            <person name="French L."/>
            <person name="Fricker D.G."/>
            <person name="Garner P."/>
            <person name="Garnett J."/>
            <person name="Ghori J."/>
            <person name="Gilbert J.G.R."/>
            <person name="Glison C."/>
            <person name="Grafham D.V."/>
            <person name="Gribble S."/>
            <person name="Griffiths C."/>
            <person name="Griffiths-Jones S."/>
            <person name="Grocock R."/>
            <person name="Guy J."/>
            <person name="Hall R.E."/>
            <person name="Hammond S."/>
            <person name="Harley J.L."/>
            <person name="Harrison E.S.I."/>
            <person name="Hart E.A."/>
            <person name="Heath P.D."/>
            <person name="Henderson C.D."/>
            <person name="Hopkins B.L."/>
            <person name="Howard P.J."/>
            <person name="Howden P.J."/>
            <person name="Huckle E."/>
            <person name="Johnson C."/>
            <person name="Johnson D."/>
            <person name="Joy A.A."/>
            <person name="Kay M."/>
            <person name="Keenan S."/>
            <person name="Kershaw J.K."/>
            <person name="Kimberley A.M."/>
            <person name="King A."/>
            <person name="Knights A."/>
            <person name="Laird G.K."/>
            <person name="Langford C."/>
            <person name="Lawlor S."/>
            <person name="Leongamornlert D.A."/>
            <person name="Leversha M."/>
            <person name="Lloyd C."/>
            <person name="Lloyd D.M."/>
            <person name="Lovell J."/>
            <person name="Martin S."/>
            <person name="Mashreghi-Mohammadi M."/>
            <person name="Matthews L."/>
            <person name="McLaren S."/>
            <person name="McLay K.E."/>
            <person name="McMurray A."/>
            <person name="Milne S."/>
            <person name="Nickerson T."/>
            <person name="Nisbett J."/>
            <person name="Nordsiek G."/>
            <person name="Pearce A.V."/>
            <person name="Peck A.I."/>
            <person name="Porter K.M."/>
            <person name="Pandian R."/>
            <person name="Pelan S."/>
            <person name="Phillimore B."/>
            <person name="Povey S."/>
            <person name="Ramsey Y."/>
            <person name="Rand V."/>
            <person name="Scharfe M."/>
            <person name="Sehra H.K."/>
            <person name="Shownkeen R."/>
            <person name="Sims S.K."/>
            <person name="Skuce C.D."/>
            <person name="Smith M."/>
            <person name="Steward C.A."/>
            <person name="Swarbreck D."/>
            <person name="Sycamore N."/>
            <person name="Tester J."/>
            <person name="Thorpe A."/>
            <person name="Tracey A."/>
            <person name="Tromans A."/>
            <person name="Thomas D.W."/>
            <person name="Wall M."/>
            <person name="Wallis J.M."/>
            <person name="West A.P."/>
            <person name="Whitehead S.L."/>
            <person name="Willey D.L."/>
            <person name="Williams S.A."/>
            <person name="Wilming L."/>
            <person name="Wray P.W."/>
            <person name="Young L."/>
            <person name="Ashurst J.L."/>
            <person name="Coulson A."/>
            <person name="Blocker H."/>
            <person name="Durbin R.M."/>
            <person name="Sulston J.E."/>
            <person name="Hubbard T."/>
            <person name="Jackson M.J."/>
            <person name="Bentley D.R."/>
            <person name="Beck S."/>
            <person name="Rogers J."/>
            <person name="Dunham I."/>
        </authorList>
    </citation>
    <scope>NUCLEOTIDE SEQUENCE [LARGE SCALE GENOMIC DNA]</scope>
</reference>
<reference key="7">
    <citation type="submission" date="2005-09" db="EMBL/GenBank/DDBJ databases">
        <authorList>
            <person name="Mural R.J."/>
            <person name="Istrail S."/>
            <person name="Sutton G.G."/>
            <person name="Florea L."/>
            <person name="Halpern A.L."/>
            <person name="Mobarry C.M."/>
            <person name="Lippert R."/>
            <person name="Walenz B."/>
            <person name="Shatkay H."/>
            <person name="Dew I."/>
            <person name="Miller J.R."/>
            <person name="Flanigan M.J."/>
            <person name="Edwards N.J."/>
            <person name="Bolanos R."/>
            <person name="Fasulo D."/>
            <person name="Halldorsson B.V."/>
            <person name="Hannenhalli S."/>
            <person name="Turner R."/>
            <person name="Yooseph S."/>
            <person name="Lu F."/>
            <person name="Nusskern D.R."/>
            <person name="Shue B.C."/>
            <person name="Zheng X.H."/>
            <person name="Zhong F."/>
            <person name="Delcher A.L."/>
            <person name="Huson D.H."/>
            <person name="Kravitz S.A."/>
            <person name="Mouchard L."/>
            <person name="Reinert K."/>
            <person name="Remington K.A."/>
            <person name="Clark A.G."/>
            <person name="Waterman M.S."/>
            <person name="Eichler E.E."/>
            <person name="Adams M.D."/>
            <person name="Hunkapiller M.W."/>
            <person name="Myers E.W."/>
            <person name="Venter J.C."/>
        </authorList>
    </citation>
    <scope>NUCLEOTIDE SEQUENCE [LARGE SCALE GENOMIC DNA]</scope>
</reference>
<reference key="8">
    <citation type="journal article" date="2004" name="Genome Res.">
        <title>The status, quality, and expansion of the NIH full-length cDNA project: the Mammalian Gene Collection (MGC).</title>
        <authorList>
            <consortium name="The MGC Project Team"/>
        </authorList>
    </citation>
    <scope>NUCLEOTIDE SEQUENCE [LARGE SCALE MRNA] (ISOFORM LONG)</scope>
</reference>
<reference key="9">
    <citation type="journal article" date="2003" name="J. Virol.">
        <title>A cellular receptor of human rhinovirus type 2, the very-low-density lipoprotein receptor, binds to two neighboring proteins of the viral capsid.</title>
        <authorList>
            <person name="Neumann E."/>
            <person name="Moser R."/>
            <person name="Snyers L."/>
            <person name="Blaas D."/>
            <person name="Hewat E.A."/>
        </authorList>
    </citation>
    <scope>INTERACTION WITH HRV VP1 (MICROBIAL INFECTION)</scope>
</reference>
<reference key="10">
    <citation type="journal article" date="2007" name="PLoS ONE">
        <title>The Pafah1b complex interacts with the reelin receptor VLDLR.</title>
        <authorList>
            <person name="Zhang G."/>
            <person name="Assadi A.H."/>
            <person name="McNeil R.S."/>
            <person name="Beffert U."/>
            <person name="Wynshaw-Boris A."/>
            <person name="Herz J."/>
            <person name="Clark G.D."/>
            <person name="D'Arcangelo G."/>
        </authorList>
    </citation>
    <scope>INTERACTION WITH PAFAH1B3 AND PAFAH1B2</scope>
</reference>
<reference key="11">
    <citation type="journal article" date="2008" name="J. Biol. Chem.">
        <title>The proprotein convertase PCSK9 induces the degradation of low density lipoprotein receptor (LDLR) and its closest family members VLDLR and ApoER2.</title>
        <authorList>
            <person name="Poirier S."/>
            <person name="Mayer G."/>
            <person name="Benjannet S."/>
            <person name="Bergeron E."/>
            <person name="Marcinkiewicz J."/>
            <person name="Nassoury N."/>
            <person name="Mayer H."/>
            <person name="Nimpf J."/>
            <person name="Prat A."/>
            <person name="Seidah N.G."/>
        </authorList>
    </citation>
    <scope>INTERACTION WITH PCSK9</scope>
</reference>
<reference key="12">
    <citation type="journal article" date="2010" name="J. Biol. Chem.">
        <title>The E3 ubiquitin ligase IDOL induces the degradation of the low density lipoprotein receptor family members VLDLR and ApoER2.</title>
        <authorList>
            <person name="Hong C."/>
            <person name="Duit S."/>
            <person name="Jalonen P."/>
            <person name="Out R."/>
            <person name="Scheer L."/>
            <person name="Sorrentino V."/>
            <person name="Boyadjian R."/>
            <person name="Rodenburg K.W."/>
            <person name="Foley E."/>
            <person name="Korhonen L."/>
            <person name="Lindholm D."/>
            <person name="Nimpf J."/>
            <person name="van Berkel T.J."/>
            <person name="Tontonoz P."/>
            <person name="Zelcer N."/>
        </authorList>
    </citation>
    <scope>UBIQUITINATION AT LYS-839 BY MYLIP</scope>
    <scope>GLYCOSYLATION</scope>
    <scope>MUTAGENESIS OF LYS-825; LYS-828 AND LYS-839</scope>
</reference>
<reference key="13">
    <citation type="journal article" date="2013" name="Exp. Cell Res.">
        <title>Stx5 is a novel interactor of VLDL-R to affect its intracellular trafficking and processing.</title>
        <authorList>
            <person name="Wagner T."/>
            <person name="Dieckmann M."/>
            <person name="Jaeger S."/>
            <person name="Weggen S."/>
            <person name="Pietrzik C.U."/>
        </authorList>
    </citation>
    <scope>INTERACTION WITH STX5</scope>
    <scope>SUBCELLULAR LOCATION</scope>
    <scope>GLYCOSYLATION</scope>
</reference>
<reference key="14">
    <citation type="journal article" date="2014" name="J. Biol. Chem.">
        <title>Clusterin is a ligand for apolipoprotein E receptor 2 (ApoER2) and very low density lipoprotein receptor (VLDLR) and signals via the Reelin-signaling pathway.</title>
        <authorList>
            <person name="Leeb C."/>
            <person name="Eresheim C."/>
            <person name="Nimpf J."/>
        </authorList>
    </citation>
    <scope>FUNCTION</scope>
    <scope>SUBCELLULAR LOCATION</scope>
    <scope>INTERACTION WITH CLU</scope>
</reference>
<reference key="15">
    <citation type="journal article" date="2019" name="Front. Mol. Neurosci.">
        <title>Differential Action of Reelin on Oligomerization of ApoER2 and VLDL Receptor in HEK293 Cells Assessed by Time-Resolved Anisotropy and Fluorescence Lifetime Imaging Microscopy.</title>
        <authorList>
            <person name="Dlugosz P."/>
            <person name="Tresky R."/>
            <person name="Nimpf J."/>
        </authorList>
    </citation>
    <scope>FUNCTION</scope>
    <scope>SUBUNIT</scope>
    <scope>SUBCELLULAR LOCATION</scope>
    <scope>INTERACTION WITH RELN AND LRP8/APOER2</scope>
</reference>
<reference key="16">
    <citation type="journal article" date="2022" name="Nature">
        <title>VLDLR and ApoER2 are receptors for multiple alphaviruses.</title>
        <authorList>
            <person name="Clark L.E."/>
            <person name="Clark S.A."/>
            <person name="Lin C."/>
            <person name="Liu J."/>
            <person name="Coscia A."/>
            <person name="Nabel K.G."/>
            <person name="Yang P."/>
            <person name="Neel D.V."/>
            <person name="Lee H."/>
            <person name="Brusic V."/>
            <person name="Stryapunina I."/>
            <person name="Plante K.S."/>
            <person name="Ahmed A.A."/>
            <person name="Catteruccia F."/>
            <person name="Young-Pearse T.L."/>
            <person name="Chiu I.M."/>
            <person name="Llopis P.M."/>
            <person name="Weaver S.C."/>
            <person name="Abraham J."/>
        </authorList>
    </citation>
    <scope>FUNCTION (MICROBIAL INFECTION)</scope>
    <scope>INTERACTION WITH SEMLIKI FOREST VIRUS E2-E1 HETERODIMER (MICROBIAL INFECTION)</scope>
    <scope>SUBCELLULAR LOCATION</scope>
</reference>
<reference key="17">
    <citation type="journal article" date="2004" name="Nat. Struct. Mol. Biol.">
        <title>X-ray structure of a minor group human rhinovirus bound to a fragment of its cellular receptor protein.</title>
        <authorList>
            <person name="Verdaguer N."/>
            <person name="Fita I."/>
            <person name="Reithmayer M."/>
            <person name="Moser R."/>
            <person name="Blaas D."/>
        </authorList>
    </citation>
    <scope>X-RAY CRYSTALLOGRAPHY (3.6 ANGSTROMS) OF 111-151 IN COMPLEX WITH HRV2</scope>
</reference>
<reference evidence="23" key="18">
    <citation type="journal article" date="2023" name="Cell">
        <title>Structure of Semliki Forest virus in complex with its receptor VLDLR.</title>
        <authorList>
            <person name="Cao D."/>
            <person name="Ma B."/>
            <person name="Cao Z."/>
            <person name="Zhang X."/>
            <person name="Xiang Y."/>
        </authorList>
    </citation>
    <scope>STRUCTURE BY ELECTRON MICROSCOPY (3.00 ANGSTROMS) OF 111-149 IN COMPLEX WITH SEMLIKI FOREST VIRUS VLP</scope>
    <scope>INTERACTION WITH SEMLIKI FOREST VIRUS SPIKE GLYCOPROTEIN E1 (MICROBIAL INFECTION)</scope>
    <scope>MUTAGENESIS OF GLU-117; PRO-129; TRP-132; ASP-135; GLU-137 AND ASP-139</scope>
</reference>
<reference evidence="25" key="19">
    <citation type="journal article" date="2024" name="Cell">
        <title>Structural and functional basis of VLDLR usage by Eastern equine encephalitis virus.</title>
        <authorList>
            <person name="Adams L.J."/>
            <person name="Raju S."/>
            <person name="Ma H."/>
            <person name="Gilliland T."/>
            <person name="Reed D.S."/>
            <person name="Klimstra W.B."/>
            <person name="Fremont D.H."/>
            <person name="Diamond M.S."/>
        </authorList>
    </citation>
    <scope>STRUCTURE BY ELECTRON MICROSCOPY (2.86 ANGSTROMS) OF 28-7972 IN COMPLEX WITH EQUINE ENCEPHALITIS VIRUS SPIKE GLYCOPROTEIN E2</scope>
    <scope>INTERACTION WITH EASTERN EQUINE ENCEPHALITIS VIRUS SPIKE GLYCOPROTEIN E2 (MICROBIAL INFECTION)</scope>
</reference>
<reference evidence="24" key="20">
    <citation type="journal article" date="2024" name="Nat. Commun.">
        <title>Structural basis for VLDLR recognition by eastern equine encephalitis virus.</title>
        <authorList>
            <person name="Yang P."/>
            <person name="Li W."/>
            <person name="Fan X."/>
            <person name="Pan J."/>
            <person name="Mann C.J."/>
            <person name="Varnum H."/>
            <person name="Clark L.E."/>
            <person name="Clark S.A."/>
            <person name="Coscia A."/>
            <person name="Basu H."/>
            <person name="Smith K.N."/>
            <person name="Brusic V."/>
            <person name="Abraham J."/>
        </authorList>
    </citation>
    <scope>STRUCTURE BY ELECTRON MICROSCOPY (3.70 ANGSTROMS) OF 72-108 IN COMPLEX WITH SEMLIKI FOREST VIRUS VLP</scope>
    <scope>INTERACTION WITH SEMLIKI FOREST VIRUS SPIKE GLYCOPROTEIN E1 (MICROBIAL INFECTION)</scope>
    <scope>INTERACTION WITH EASTERN EQUINE ENCEPHALITIS VIRUS SPIKE GLYCOPROTEIN E2 (MICROBIAL INFECTION)</scope>
    <scope>MUTAGENESIS OF TRP-89; ASP-92; ASP-94 AND ASP-96</scope>
</reference>
<reference key="21">
    <citation type="journal article" date="1999" name="Nat. Genet.">
        <title>Characterization of single-nucleotide polymorphisms in coding regions of human genes.</title>
        <authorList>
            <person name="Cargill M."/>
            <person name="Altshuler D."/>
            <person name="Ireland J."/>
            <person name="Sklar P."/>
            <person name="Ardlie K."/>
            <person name="Patil N."/>
            <person name="Shaw N."/>
            <person name="Lane C.R."/>
            <person name="Lim E.P."/>
            <person name="Kalyanaraman N."/>
            <person name="Nemesh J."/>
            <person name="Ziaugra L."/>
            <person name="Friedland L."/>
            <person name="Rolfe A."/>
            <person name="Warrington J."/>
            <person name="Lipshutz R."/>
            <person name="Daley G.Q."/>
            <person name="Lander E.S."/>
        </authorList>
    </citation>
    <scope>VARIANTS ILE-59 AND LYS-379</scope>
</reference>
<reference key="22">
    <citation type="journal article" date="1999" name="Nat. Genet.">
        <authorList>
            <person name="Cargill M."/>
            <person name="Altshuler D."/>
            <person name="Ireland J."/>
            <person name="Sklar P."/>
            <person name="Ardlie K."/>
            <person name="Patil N."/>
            <person name="Shaw N."/>
            <person name="Lane C.R."/>
            <person name="Lim E.P."/>
            <person name="Kalyanaraman N."/>
            <person name="Nemesh J."/>
            <person name="Ziaugra L."/>
            <person name="Friedland L."/>
            <person name="Rolfe A."/>
            <person name="Warrington J."/>
            <person name="Lipshutz R."/>
            <person name="Daley G.Q."/>
            <person name="Lander E.S."/>
        </authorList>
    </citation>
    <scope>ERRATUM OF PUBMED:10391209</scope>
</reference>
<reference key="23">
    <citation type="journal article" date="2005" name="Am. J. Hum. Genet.">
        <title>Homozygous deletion of the very low density lipoprotein receptor gene causes autosomal recessive cerebellar hypoplasia with cerebral gyral simplification.</title>
        <authorList>
            <person name="Boycott K.M."/>
            <person name="Flavelle S."/>
            <person name="Bureau A."/>
            <person name="Glass H.C."/>
            <person name="Fujiwara T.M."/>
            <person name="Wirrell E."/>
            <person name="Davey K."/>
            <person name="Chudley A.E."/>
            <person name="Scott J.N."/>
            <person name="McLeod D.R."/>
            <person name="Parboosingh J.S."/>
        </authorList>
    </citation>
    <scope>INVOLVEMENT IN CAMRQ1</scope>
</reference>
<evidence type="ECO:0000250" key="1"/>
<evidence type="ECO:0000250" key="2">
    <source>
        <dbReference type="UniProtKB" id="P98156"/>
    </source>
</evidence>
<evidence type="ECO:0000255" key="3"/>
<evidence type="ECO:0000255" key="4">
    <source>
        <dbReference type="PROSITE-ProRule" id="PRU00076"/>
    </source>
</evidence>
<evidence type="ECO:0000255" key="5">
    <source>
        <dbReference type="PROSITE-ProRule" id="PRU00124"/>
    </source>
</evidence>
<evidence type="ECO:0000269" key="6">
    <source>
    </source>
</evidence>
<evidence type="ECO:0000269" key="7">
    <source>
    </source>
</evidence>
<evidence type="ECO:0000269" key="8">
    <source>
    </source>
</evidence>
<evidence type="ECO:0000269" key="9">
    <source>
    </source>
</evidence>
<evidence type="ECO:0000269" key="10">
    <source>
    </source>
</evidence>
<evidence type="ECO:0000269" key="11">
    <source>
    </source>
</evidence>
<evidence type="ECO:0000269" key="12">
    <source>
    </source>
</evidence>
<evidence type="ECO:0000269" key="13">
    <source>
    </source>
</evidence>
<evidence type="ECO:0000269" key="14">
    <source>
    </source>
</evidence>
<evidence type="ECO:0000269" key="15">
    <source>
    </source>
</evidence>
<evidence type="ECO:0000269" key="16">
    <source>
    </source>
</evidence>
<evidence type="ECO:0000269" key="17">
    <source>
    </source>
</evidence>
<evidence type="ECO:0000269" key="18">
    <source>
    </source>
</evidence>
<evidence type="ECO:0000269" key="19">
    <source>
    </source>
</evidence>
<evidence type="ECO:0000269" key="20">
    <source ref="5"/>
</evidence>
<evidence type="ECO:0000305" key="21"/>
<evidence type="ECO:0000305" key="22">
    <source>
    </source>
</evidence>
<evidence type="ECO:0007744" key="23">
    <source>
        <dbReference type="PDB" id="8IHP"/>
    </source>
</evidence>
<evidence type="ECO:0007744" key="24">
    <source>
        <dbReference type="PDB" id="8UA8"/>
    </source>
</evidence>
<evidence type="ECO:0007744" key="25">
    <source>
        <dbReference type="PDB" id="8UFB"/>
    </source>
</evidence>
<evidence type="ECO:0007829" key="26">
    <source>
        <dbReference type="PDB" id="3DPR"/>
    </source>
</evidence>
<evidence type="ECO:0007829" key="27">
    <source>
        <dbReference type="PDB" id="6BYV"/>
    </source>
</evidence>
<sequence length="873" mass="96098">MGTSALWALWLLLALCWAPRESGATGTGRKAKCEPSQFQCTNGRCITLLWKCDGDEDCVDGSDEKNCVKKTCAESDFVCNNGQCVPSRWKCDGDPDCEDGSDESPEQCHMRTCRIHEISCGAHSTQCIPVSWRCDGENDCDSGEDEENCGNITCSPDEFTCSSGRCISRNFVCNGQDDCSDGSDELDCAPPTCGAHEFQCSTSSCIPISWVCDDDADCSDQSDESLEQCGRQPVIHTKCPASEIQCGSGECIHKKWRCDGDPDCKDGSDEVNCPSRTCRPDQFECEDGSCIHGSRQCNGIRDCVDGSDEVNCKNVNQCLGPGKFKCRSGECIDISKVCNQEQDCRDWSDEPLKECHINECLVNNGGCSHICKDLVIGYECDCAAGFELIDRKTCGDIDECQNPGICSQICINLKGGYKCECSRGYQMDLATGVCKAVGKEPSLIFTNRRDIRKIGLERKEYIQLVEQLRNTVALDADIAAQKLFWADLSQKAIFSASIDDKVGRHVKMIDNVYNPAAIAVDWVYKTIYWTDAASKTISVATLDGTKRKFLFNSDLREPASIAVDPLSGFVYWSDWGEPAKIEKAGMNGFDRRPLVTADIQWPNGITLDLIKSRLYWLDSKLHMLSSVDLNGQDRRIVLKSLEFLAHPLALTIFEDRVYWIDGENEAVYGANKFTGSELATLVNNLNDAQDIIVYHELVQPSGKNWCEEDMENGGCEYLCLPAPQINDHSPKYTCSCPSGYNVEENGRDCQSTATTVTYSETKDTNTTEISATSGLVPGGINVTTAVSEVSVPPKGTSAAWAILPLLLLVMAAVGGYLMWRNWQHKNMKSMNFDNPVYLKTTEEDLSIDIGRHSASVGHTYPAISVVSTDDDLA</sequence>
<dbReference type="EMBL" id="L20470">
    <property type="protein sequence ID" value="AAA53684.1"/>
    <property type="molecule type" value="mRNA"/>
</dbReference>
<dbReference type="EMBL" id="S73849">
    <property type="protein sequence ID" value="AAB31735.1"/>
    <property type="molecule type" value="mRNA"/>
</dbReference>
<dbReference type="EMBL" id="D16532">
    <property type="protein sequence ID" value="BAA03969.1"/>
    <property type="molecule type" value="Genomic_DNA"/>
</dbReference>
<dbReference type="EMBL" id="D16493">
    <property type="protein sequence ID" value="BAA03945.1"/>
    <property type="molecule type" value="mRNA"/>
</dbReference>
<dbReference type="EMBL" id="D16494">
    <property type="protein sequence ID" value="BAA03946.1"/>
    <property type="molecule type" value="mRNA"/>
</dbReference>
<dbReference type="EMBL" id="L22431">
    <property type="protein sequence ID" value="AAA61344.1"/>
    <property type="molecule type" value="mRNA"/>
</dbReference>
<dbReference type="EMBL" id="DQ067198">
    <property type="protein sequence ID" value="AAY46157.1"/>
    <property type="molecule type" value="Genomic_DNA"/>
</dbReference>
<dbReference type="EMBL" id="AL450467">
    <property type="status" value="NOT_ANNOTATED_CDS"/>
    <property type="molecule type" value="Genomic_DNA"/>
</dbReference>
<dbReference type="EMBL" id="CH471071">
    <property type="protein sequence ID" value="EAW58805.1"/>
    <property type="molecule type" value="Genomic_DNA"/>
</dbReference>
<dbReference type="EMBL" id="CH471071">
    <property type="protein sequence ID" value="EAW58806.1"/>
    <property type="molecule type" value="Genomic_DNA"/>
</dbReference>
<dbReference type="EMBL" id="BC136562">
    <property type="protein sequence ID" value="AAI36563.1"/>
    <property type="molecule type" value="mRNA"/>
</dbReference>
<dbReference type="CCDS" id="CCDS34979.1">
    <molecule id="P98155-2"/>
</dbReference>
<dbReference type="CCDS" id="CCDS6446.1">
    <molecule id="P98155-1"/>
</dbReference>
<dbReference type="PIR" id="A49729">
    <property type="entry name" value="A49729"/>
</dbReference>
<dbReference type="RefSeq" id="NP_001018066.1">
    <molecule id="P98155-2"/>
    <property type="nucleotide sequence ID" value="NM_001018056.3"/>
</dbReference>
<dbReference type="RefSeq" id="NP_003374.3">
    <molecule id="P98155-1"/>
    <property type="nucleotide sequence ID" value="NM_003383.4"/>
</dbReference>
<dbReference type="PDB" id="1V9U">
    <property type="method" value="X-ray"/>
    <property type="resolution" value="3.60 A"/>
    <property type="chains" value="5=111-151"/>
</dbReference>
<dbReference type="PDB" id="3DPR">
    <property type="method" value="X-ray"/>
    <property type="resolution" value="3.50 A"/>
    <property type="chains" value="E=113-151"/>
</dbReference>
<dbReference type="PDB" id="6BYV">
    <property type="method" value="NMR"/>
    <property type="chains" value="A=70-190"/>
</dbReference>
<dbReference type="PDB" id="8IHP">
    <property type="method" value="EM"/>
    <property type="resolution" value="3.00 A"/>
    <property type="chains" value="M/N/O=111-149"/>
</dbReference>
<dbReference type="PDB" id="8UA4">
    <property type="method" value="EM"/>
    <property type="resolution" value="3.58 A"/>
    <property type="chains" value="R=33-68"/>
</dbReference>
<dbReference type="PDB" id="8UA8">
    <property type="method" value="EM"/>
    <property type="resolution" value="3.70 A"/>
    <property type="chains" value="R=72-108"/>
</dbReference>
<dbReference type="PDB" id="8UFB">
    <property type="method" value="EM"/>
    <property type="resolution" value="3.89 A"/>
    <property type="chains" value="R/S/T/U/V/W/X/Y=28-797"/>
</dbReference>
<dbReference type="PDB" id="8UFC">
    <property type="method" value="EM"/>
    <property type="resolution" value="3.09 A"/>
    <property type="chains" value="V/W/X/Y=31-108"/>
</dbReference>
<dbReference type="PDB" id="8X0K">
    <property type="method" value="EM"/>
    <property type="resolution" value="3.50 A"/>
    <property type="chains" value="D/H/L/P=113-149"/>
</dbReference>
<dbReference type="PDB" id="8X0L">
    <property type="method" value="EM"/>
    <property type="resolution" value="3.50 A"/>
    <property type="chains" value="D/H/L=113-149"/>
</dbReference>
<dbReference type="PDB" id="8X0M">
    <property type="method" value="EM"/>
    <property type="resolution" value="3.50 A"/>
    <property type="chains" value="D/H=113-149"/>
</dbReference>
<dbReference type="PDB" id="8XI4">
    <property type="method" value="EM"/>
    <property type="resolution" value="3.40 A"/>
    <property type="chains" value="M/N/O/P=31-113"/>
</dbReference>
<dbReference type="PDB" id="8XI5">
    <property type="method" value="EM"/>
    <property type="resolution" value="3.40 A"/>
    <property type="chains" value="M/N/O/P=191-231, Q/R/S/T=111-151"/>
</dbReference>
<dbReference type="PDB" id="8YS2">
    <property type="method" value="EM"/>
    <property type="resolution" value="5.20 A"/>
    <property type="chains" value="M/N/O/P=31-110"/>
</dbReference>
<dbReference type="PDB" id="8YS4">
    <property type="method" value="EM"/>
    <property type="resolution" value="4.80 A"/>
    <property type="chains" value="M/N/O/P=191-231, Q/R/S/T=111-151"/>
</dbReference>
<dbReference type="PDB" id="8YVZ">
    <property type="method" value="EM"/>
    <property type="resolution" value="3.45 A"/>
    <property type="chains" value="E/R/S/T=110-151"/>
</dbReference>
<dbReference type="PDB" id="8YW0">
    <property type="method" value="EM"/>
    <property type="resolution" value="3.55 A"/>
    <property type="chains" value="E/R/T=191-230"/>
</dbReference>
<dbReference type="PDB" id="8YW1">
    <property type="method" value="EM"/>
    <property type="resolution" value="3.44 A"/>
    <property type="chains" value="C=111-231"/>
</dbReference>
<dbReference type="PDB" id="8YW2">
    <property type="method" value="EM"/>
    <property type="resolution" value="3.70 A"/>
    <property type="chains" value="A=70-231"/>
</dbReference>
<dbReference type="PDBsum" id="1V9U"/>
<dbReference type="PDBsum" id="3DPR"/>
<dbReference type="PDBsum" id="6BYV"/>
<dbReference type="PDBsum" id="8IHP"/>
<dbReference type="PDBsum" id="8UA4"/>
<dbReference type="PDBsum" id="8UA8"/>
<dbReference type="PDBsum" id="8UFB"/>
<dbReference type="PDBsum" id="8UFC"/>
<dbReference type="PDBsum" id="8X0K"/>
<dbReference type="PDBsum" id="8X0L"/>
<dbReference type="PDBsum" id="8X0M"/>
<dbReference type="PDBsum" id="8XI4"/>
<dbReference type="PDBsum" id="8XI5"/>
<dbReference type="PDBsum" id="8YS2"/>
<dbReference type="PDBsum" id="8YS4"/>
<dbReference type="PDBsum" id="8YVZ"/>
<dbReference type="PDBsum" id="8YW0"/>
<dbReference type="PDBsum" id="8YW1"/>
<dbReference type="PDBsum" id="8YW2"/>
<dbReference type="EMDB" id="EMD-35451"/>
<dbReference type="EMDB" id="EMD-37980"/>
<dbReference type="EMDB" id="EMD-37981"/>
<dbReference type="EMDB" id="EMD-37982"/>
<dbReference type="EMDB" id="EMD-38370"/>
<dbReference type="EMDB" id="EMD-38371"/>
<dbReference type="EMDB" id="EMD-39617"/>
<dbReference type="EMDB" id="EMD-39618"/>
<dbReference type="EMDB" id="EMD-39619"/>
<dbReference type="EMDB" id="EMD-39620"/>
<dbReference type="EMDB" id="EMD-42050"/>
<dbReference type="EMDB" id="EMD-42054"/>
<dbReference type="EMDB" id="EMD-42190"/>
<dbReference type="EMDB" id="EMD-42192"/>
<dbReference type="SMR" id="P98155"/>
<dbReference type="BioGRID" id="113277">
    <property type="interactions" value="36"/>
</dbReference>
<dbReference type="DIP" id="DIP-40925N"/>
<dbReference type="FunCoup" id="P98155">
    <property type="interactions" value="265"/>
</dbReference>
<dbReference type="IntAct" id="P98155">
    <property type="interactions" value="18"/>
</dbReference>
<dbReference type="STRING" id="9606.ENSP00000371532"/>
<dbReference type="DrugBank" id="DB14003">
    <property type="generic name" value="alpha-Tocopherol acetate"/>
</dbReference>
<dbReference type="DrugBank" id="DB06755">
    <property type="generic name" value="Beta carotene"/>
</dbReference>
<dbReference type="DrugBank" id="DB06772">
    <property type="generic name" value="Cabazitaxel"/>
</dbReference>
<dbReference type="DrugBank" id="DB03017">
    <property type="generic name" value="Lauric acid"/>
</dbReference>
<dbReference type="DrugBank" id="DB11251">
    <property type="generic name" value="Tocopherol"/>
</dbReference>
<dbReference type="DrugBank" id="DB09270">
    <property type="generic name" value="Ubidecarenone"/>
</dbReference>
<dbReference type="GlyCosmos" id="P98155">
    <property type="glycosylation" value="6 sites, 1 glycan"/>
</dbReference>
<dbReference type="GlyGen" id="P98155">
    <property type="glycosylation" value="7 sites, 2 N-linked glycans (2 sites), 2 O-linked glycans (4 sites)"/>
</dbReference>
<dbReference type="iPTMnet" id="P98155"/>
<dbReference type="PhosphoSitePlus" id="P98155"/>
<dbReference type="BioMuta" id="VLDLR"/>
<dbReference type="DMDM" id="1730111"/>
<dbReference type="jPOST" id="P98155"/>
<dbReference type="MassIVE" id="P98155"/>
<dbReference type="PaxDb" id="9606-ENSP00000371532"/>
<dbReference type="PeptideAtlas" id="P98155"/>
<dbReference type="ProteomicsDB" id="57794">
    <molecule id="P98155-1"/>
</dbReference>
<dbReference type="ProteomicsDB" id="57795">
    <molecule id="P98155-2"/>
</dbReference>
<dbReference type="Pumba" id="P98155"/>
<dbReference type="Antibodypedia" id="9217">
    <property type="antibodies" value="491 antibodies from 37 providers"/>
</dbReference>
<dbReference type="DNASU" id="7436"/>
<dbReference type="Ensembl" id="ENST00000382100.8">
    <molecule id="P98155-1"/>
    <property type="protein sequence ID" value="ENSP00000371532.2"/>
    <property type="gene ID" value="ENSG00000147852.17"/>
</dbReference>
<dbReference type="Ensembl" id="ENST00000681306.1">
    <molecule id="P98155-2"/>
    <property type="protein sequence ID" value="ENSP00000506072.1"/>
    <property type="gene ID" value="ENSG00000147852.17"/>
</dbReference>
<dbReference type="GeneID" id="7436"/>
<dbReference type="KEGG" id="hsa:7436"/>
<dbReference type="MANE-Select" id="ENST00000382100.8">
    <property type="protein sequence ID" value="ENSP00000371532.2"/>
    <property type="RefSeq nucleotide sequence ID" value="NM_003383.5"/>
    <property type="RefSeq protein sequence ID" value="NP_003374.3"/>
</dbReference>
<dbReference type="UCSC" id="uc003zhk.2">
    <molecule id="P98155-1"/>
    <property type="organism name" value="human"/>
</dbReference>
<dbReference type="AGR" id="HGNC:12698"/>
<dbReference type="CTD" id="7436"/>
<dbReference type="DisGeNET" id="7436"/>
<dbReference type="GeneCards" id="VLDLR"/>
<dbReference type="GeneReviews" id="VLDLR"/>
<dbReference type="HGNC" id="HGNC:12698">
    <property type="gene designation" value="VLDLR"/>
</dbReference>
<dbReference type="HPA" id="ENSG00000147852">
    <property type="expression patterns" value="Tissue enhanced (ovary)"/>
</dbReference>
<dbReference type="MalaCards" id="VLDLR"/>
<dbReference type="MIM" id="192977">
    <property type="type" value="gene"/>
</dbReference>
<dbReference type="MIM" id="224050">
    <property type="type" value="phenotype"/>
</dbReference>
<dbReference type="neXtProt" id="NX_P98155"/>
<dbReference type="OpenTargets" id="ENSG00000147852"/>
<dbReference type="Orphanet" id="1766">
    <property type="disease" value="Dysequilibrium syndrome"/>
</dbReference>
<dbReference type="PharmGKB" id="PA37317"/>
<dbReference type="VEuPathDB" id="HostDB:ENSG00000147852"/>
<dbReference type="eggNOG" id="KOG1215">
    <property type="taxonomic scope" value="Eukaryota"/>
</dbReference>
<dbReference type="GeneTree" id="ENSGT00940000155460"/>
<dbReference type="HOGENOM" id="CLU_008163_2_0_1"/>
<dbReference type="InParanoid" id="P98155"/>
<dbReference type="OMA" id="ADKRNCQ"/>
<dbReference type="OrthoDB" id="5958943at2759"/>
<dbReference type="PAN-GO" id="P98155">
    <property type="GO annotations" value="2 GO annotations based on evolutionary models"/>
</dbReference>
<dbReference type="PhylomeDB" id="P98155"/>
<dbReference type="TreeFam" id="TF351700"/>
<dbReference type="PathwayCommons" id="P98155"/>
<dbReference type="Reactome" id="R-HSA-8866376">
    <property type="pathway name" value="Reelin signalling pathway"/>
</dbReference>
<dbReference type="Reactome" id="R-HSA-8866427">
    <property type="pathway name" value="VLDLR internalisation and degradation"/>
</dbReference>
<dbReference type="Reactome" id="R-HSA-8964046">
    <property type="pathway name" value="VLDL clearance"/>
</dbReference>
<dbReference type="SignaLink" id="P98155"/>
<dbReference type="SIGNOR" id="P98155"/>
<dbReference type="BioGRID-ORCS" id="7436">
    <property type="hits" value="10 hits in 1147 CRISPR screens"/>
</dbReference>
<dbReference type="ChiTaRS" id="VLDLR">
    <property type="organism name" value="human"/>
</dbReference>
<dbReference type="EvolutionaryTrace" id="P98155"/>
<dbReference type="GeneWiki" id="VLDL_receptor"/>
<dbReference type="GenomeRNAi" id="7436"/>
<dbReference type="Pharos" id="P98155">
    <property type="development level" value="Tbio"/>
</dbReference>
<dbReference type="PRO" id="PR:P98155"/>
<dbReference type="Proteomes" id="UP000005640">
    <property type="component" value="Chromosome 9"/>
</dbReference>
<dbReference type="RNAct" id="P98155">
    <property type="molecule type" value="protein"/>
</dbReference>
<dbReference type="Bgee" id="ENSG00000147852">
    <property type="expression patterns" value="Expressed in heart right ventricle and 189 other cell types or tissues"/>
</dbReference>
<dbReference type="ExpressionAtlas" id="P98155">
    <property type="expression patterns" value="baseline and differential"/>
</dbReference>
<dbReference type="GO" id="GO:0005905">
    <property type="term" value="C:clathrin-coated pit"/>
    <property type="evidence" value="ECO:0007669"/>
    <property type="project" value="UniProtKB-SubCell"/>
</dbReference>
<dbReference type="GO" id="GO:0098978">
    <property type="term" value="C:glutamatergic synapse"/>
    <property type="evidence" value="ECO:0007669"/>
    <property type="project" value="Ensembl"/>
</dbReference>
<dbReference type="GO" id="GO:0005765">
    <property type="term" value="C:lysosomal membrane"/>
    <property type="evidence" value="ECO:0000304"/>
    <property type="project" value="Reactome"/>
</dbReference>
<dbReference type="GO" id="GO:0016020">
    <property type="term" value="C:membrane"/>
    <property type="evidence" value="ECO:0000314"/>
    <property type="project" value="MGI"/>
</dbReference>
<dbReference type="GO" id="GO:0005886">
    <property type="term" value="C:plasma membrane"/>
    <property type="evidence" value="ECO:0000318"/>
    <property type="project" value="GO_Central"/>
</dbReference>
<dbReference type="GO" id="GO:0043235">
    <property type="term" value="C:receptor complex"/>
    <property type="evidence" value="ECO:0000314"/>
    <property type="project" value="MGI"/>
</dbReference>
<dbReference type="GO" id="GO:0034361">
    <property type="term" value="C:very-low-density lipoprotein particle"/>
    <property type="evidence" value="ECO:0007669"/>
    <property type="project" value="UniProtKB-KW"/>
</dbReference>
<dbReference type="GO" id="GO:0034185">
    <property type="term" value="F:apolipoprotein binding"/>
    <property type="evidence" value="ECO:0000314"/>
    <property type="project" value="BHF-UCL"/>
</dbReference>
<dbReference type="GO" id="GO:0005509">
    <property type="term" value="F:calcium ion binding"/>
    <property type="evidence" value="ECO:0007669"/>
    <property type="project" value="InterPro"/>
</dbReference>
<dbReference type="GO" id="GO:0048306">
    <property type="term" value="F:calcium-dependent protein binding"/>
    <property type="evidence" value="ECO:0000353"/>
    <property type="project" value="BHF-UCL"/>
</dbReference>
<dbReference type="GO" id="GO:0038024">
    <property type="term" value="F:cargo receptor activity"/>
    <property type="evidence" value="ECO:0000314"/>
    <property type="project" value="BHF-UCL"/>
</dbReference>
<dbReference type="GO" id="GO:0005041">
    <property type="term" value="F:low-density lipoprotein particle receptor activity"/>
    <property type="evidence" value="ECO:0000304"/>
    <property type="project" value="ProtInc"/>
</dbReference>
<dbReference type="GO" id="GO:0038025">
    <property type="term" value="F:reelin receptor activity"/>
    <property type="evidence" value="ECO:0000250"/>
    <property type="project" value="BHF-UCL"/>
</dbReference>
<dbReference type="GO" id="GO:0034189">
    <property type="term" value="F:very-low-density lipoprotein particle binding"/>
    <property type="evidence" value="ECO:0000314"/>
    <property type="project" value="BHF-UCL"/>
</dbReference>
<dbReference type="GO" id="GO:0030229">
    <property type="term" value="F:very-low-density lipoprotein particle receptor activity"/>
    <property type="evidence" value="ECO:0000314"/>
    <property type="project" value="BHF-UCL"/>
</dbReference>
<dbReference type="GO" id="GO:0008203">
    <property type="term" value="P:cholesterol metabolic process"/>
    <property type="evidence" value="ECO:0007669"/>
    <property type="project" value="UniProtKB-KW"/>
</dbReference>
<dbReference type="GO" id="GO:0048813">
    <property type="term" value="P:dendrite morphogenesis"/>
    <property type="evidence" value="ECO:0007669"/>
    <property type="project" value="Ensembl"/>
</dbReference>
<dbReference type="GO" id="GO:0034436">
    <property type="term" value="P:glycoprotein transport"/>
    <property type="evidence" value="ECO:0000314"/>
    <property type="project" value="BHF-UCL"/>
</dbReference>
<dbReference type="GO" id="GO:0006869">
    <property type="term" value="P:lipid transport"/>
    <property type="evidence" value="ECO:0007669"/>
    <property type="project" value="UniProtKB-KW"/>
</dbReference>
<dbReference type="GO" id="GO:0007613">
    <property type="term" value="P:memory"/>
    <property type="evidence" value="ECO:0000304"/>
    <property type="project" value="ProtInc"/>
</dbReference>
<dbReference type="GO" id="GO:0007399">
    <property type="term" value="P:nervous system development"/>
    <property type="evidence" value="ECO:0000304"/>
    <property type="project" value="ProtInc"/>
</dbReference>
<dbReference type="GO" id="GO:1900006">
    <property type="term" value="P:positive regulation of dendrite development"/>
    <property type="evidence" value="ECO:0000250"/>
    <property type="project" value="BHF-UCL"/>
</dbReference>
<dbReference type="GO" id="GO:0006898">
    <property type="term" value="P:receptor-mediated endocytosis"/>
    <property type="evidence" value="ECO:0000314"/>
    <property type="project" value="BHF-UCL"/>
</dbReference>
<dbReference type="GO" id="GO:0038026">
    <property type="term" value="P:reelin-mediated signaling pathway"/>
    <property type="evidence" value="ECO:0000250"/>
    <property type="project" value="BHF-UCL"/>
</dbReference>
<dbReference type="GO" id="GO:0051963">
    <property type="term" value="P:regulation of synapse assembly"/>
    <property type="evidence" value="ECO:0007669"/>
    <property type="project" value="Ensembl"/>
</dbReference>
<dbReference type="GO" id="GO:0007165">
    <property type="term" value="P:signal transduction"/>
    <property type="evidence" value="ECO:0000304"/>
    <property type="project" value="ProtInc"/>
</dbReference>
<dbReference type="GO" id="GO:0021517">
    <property type="term" value="P:ventral spinal cord development"/>
    <property type="evidence" value="ECO:0007669"/>
    <property type="project" value="Ensembl"/>
</dbReference>
<dbReference type="GO" id="GO:0034447">
    <property type="term" value="P:very-low-density lipoprotein particle clearance"/>
    <property type="evidence" value="ECO:0000314"/>
    <property type="project" value="BHF-UCL"/>
</dbReference>
<dbReference type="CDD" id="cd00054">
    <property type="entry name" value="EGF_CA"/>
    <property type="match status" value="1"/>
</dbReference>
<dbReference type="CDD" id="cd00112">
    <property type="entry name" value="LDLa"/>
    <property type="match status" value="8"/>
</dbReference>
<dbReference type="FunFam" id="2.10.25.10:FF:000009">
    <property type="entry name" value="Low-density lipoprotein receptor isoform 1"/>
    <property type="match status" value="1"/>
</dbReference>
<dbReference type="FunFam" id="2.10.25.10:FF:000052">
    <property type="entry name" value="low-density lipoprotein receptor isoform X1"/>
    <property type="match status" value="1"/>
</dbReference>
<dbReference type="FunFam" id="2.120.10.30:FF:000002">
    <property type="entry name" value="low-density lipoprotein receptor isoform X1"/>
    <property type="match status" value="1"/>
</dbReference>
<dbReference type="FunFam" id="4.10.400.10:FF:000025">
    <property type="entry name" value="Very low density lipoprotein receptor"/>
    <property type="match status" value="1"/>
</dbReference>
<dbReference type="FunFam" id="4.10.400.10:FF:000038">
    <property type="entry name" value="Very low density lipoprotein receptor"/>
    <property type="match status" value="1"/>
</dbReference>
<dbReference type="FunFam" id="4.10.400.10:FF:000043">
    <property type="entry name" value="Very low density lipoprotein receptor"/>
    <property type="match status" value="1"/>
</dbReference>
<dbReference type="FunFam" id="4.10.400.10:FF:000046">
    <property type="entry name" value="Very low density lipoprotein receptor"/>
    <property type="match status" value="1"/>
</dbReference>
<dbReference type="FunFam" id="4.10.400.10:FF:000049">
    <property type="entry name" value="Very low density lipoprotein receptor"/>
    <property type="match status" value="1"/>
</dbReference>
<dbReference type="FunFam" id="4.10.400.10:FF:000051">
    <property type="entry name" value="Very low density lipoprotein receptor"/>
    <property type="match status" value="1"/>
</dbReference>
<dbReference type="FunFam" id="4.10.400.10:FF:000053">
    <property type="entry name" value="Very low density lipoprotein receptor"/>
    <property type="match status" value="1"/>
</dbReference>
<dbReference type="FunFam" id="4.10.400.10:FF:000057">
    <property type="entry name" value="Very low density lipoprotein receptor"/>
    <property type="match status" value="1"/>
</dbReference>
<dbReference type="Gene3D" id="2.10.25.10">
    <property type="entry name" value="Laminin"/>
    <property type="match status" value="3"/>
</dbReference>
<dbReference type="Gene3D" id="4.10.400.10">
    <property type="entry name" value="Low-density Lipoprotein Receptor"/>
    <property type="match status" value="8"/>
</dbReference>
<dbReference type="Gene3D" id="2.120.10.30">
    <property type="entry name" value="TolB, C-terminal domain"/>
    <property type="match status" value="1"/>
</dbReference>
<dbReference type="InterPro" id="IPR011042">
    <property type="entry name" value="6-blade_b-propeller_TolB-like"/>
</dbReference>
<dbReference type="InterPro" id="IPR001881">
    <property type="entry name" value="EGF-like_Ca-bd_dom"/>
</dbReference>
<dbReference type="InterPro" id="IPR000742">
    <property type="entry name" value="EGF-like_dom"/>
</dbReference>
<dbReference type="InterPro" id="IPR000152">
    <property type="entry name" value="EGF-type_Asp/Asn_hydroxyl_site"/>
</dbReference>
<dbReference type="InterPro" id="IPR018097">
    <property type="entry name" value="EGF_Ca-bd_CS"/>
</dbReference>
<dbReference type="InterPro" id="IPR036055">
    <property type="entry name" value="LDL_receptor-like_sf"/>
</dbReference>
<dbReference type="InterPro" id="IPR051221">
    <property type="entry name" value="LDLR-related"/>
</dbReference>
<dbReference type="InterPro" id="IPR023415">
    <property type="entry name" value="LDLR_class-A_CS"/>
</dbReference>
<dbReference type="InterPro" id="IPR000033">
    <property type="entry name" value="LDLR_classB_rpt"/>
</dbReference>
<dbReference type="InterPro" id="IPR002172">
    <property type="entry name" value="LDrepeatLR_classA_rpt"/>
</dbReference>
<dbReference type="InterPro" id="IPR049883">
    <property type="entry name" value="NOTCH1_EGF-like"/>
</dbReference>
<dbReference type="PANTHER" id="PTHR22722:SF15">
    <property type="entry name" value="LOW-DENSITY LIPOPROTEIN RECEPTOR-RELATED"/>
    <property type="match status" value="1"/>
</dbReference>
<dbReference type="PANTHER" id="PTHR22722">
    <property type="entry name" value="LOW-DENSITY LIPOPROTEIN RECEPTOR-RELATED PROTEIN 2-RELATED"/>
    <property type="match status" value="1"/>
</dbReference>
<dbReference type="Pfam" id="PF07645">
    <property type="entry name" value="EGF_CA"/>
    <property type="match status" value="1"/>
</dbReference>
<dbReference type="Pfam" id="PF14670">
    <property type="entry name" value="FXa_inhibition"/>
    <property type="match status" value="1"/>
</dbReference>
<dbReference type="Pfam" id="PF00057">
    <property type="entry name" value="Ldl_recept_a"/>
    <property type="match status" value="8"/>
</dbReference>
<dbReference type="Pfam" id="PF00058">
    <property type="entry name" value="Ldl_recept_b"/>
    <property type="match status" value="5"/>
</dbReference>
<dbReference type="PRINTS" id="PR00261">
    <property type="entry name" value="LDLRECEPTOR"/>
</dbReference>
<dbReference type="SMART" id="SM00181">
    <property type="entry name" value="EGF"/>
    <property type="match status" value="6"/>
</dbReference>
<dbReference type="SMART" id="SM00179">
    <property type="entry name" value="EGF_CA"/>
    <property type="match status" value="2"/>
</dbReference>
<dbReference type="SMART" id="SM00192">
    <property type="entry name" value="LDLa"/>
    <property type="match status" value="8"/>
</dbReference>
<dbReference type="SMART" id="SM00135">
    <property type="entry name" value="LY"/>
    <property type="match status" value="5"/>
</dbReference>
<dbReference type="SUPFAM" id="SSF57196">
    <property type="entry name" value="EGF/Laminin"/>
    <property type="match status" value="3"/>
</dbReference>
<dbReference type="SUPFAM" id="SSF57424">
    <property type="entry name" value="LDL receptor-like module"/>
    <property type="match status" value="8"/>
</dbReference>
<dbReference type="SUPFAM" id="SSF63825">
    <property type="entry name" value="YWTD domain"/>
    <property type="match status" value="1"/>
</dbReference>
<dbReference type="PROSITE" id="PS00010">
    <property type="entry name" value="ASX_HYDROXYL"/>
    <property type="match status" value="2"/>
</dbReference>
<dbReference type="PROSITE" id="PS01186">
    <property type="entry name" value="EGF_2"/>
    <property type="match status" value="3"/>
</dbReference>
<dbReference type="PROSITE" id="PS50026">
    <property type="entry name" value="EGF_3"/>
    <property type="match status" value="2"/>
</dbReference>
<dbReference type="PROSITE" id="PS01187">
    <property type="entry name" value="EGF_CA"/>
    <property type="match status" value="1"/>
</dbReference>
<dbReference type="PROSITE" id="PS01209">
    <property type="entry name" value="LDLRA_1"/>
    <property type="match status" value="8"/>
</dbReference>
<dbReference type="PROSITE" id="PS50068">
    <property type="entry name" value="LDLRA_2"/>
    <property type="match status" value="8"/>
</dbReference>
<dbReference type="PROSITE" id="PS51120">
    <property type="entry name" value="LDLRB"/>
    <property type="match status" value="5"/>
</dbReference>
<feature type="signal peptide" evidence="3">
    <location>
        <begin position="1"/>
        <end position="27"/>
    </location>
</feature>
<feature type="chain" id="PRO_0000017343" description="Very low-density lipoprotein receptor">
    <location>
        <begin position="28"/>
        <end position="873"/>
    </location>
</feature>
<feature type="topological domain" description="Extracellular" evidence="3">
    <location>
        <begin position="28"/>
        <end position="797"/>
    </location>
</feature>
<feature type="transmembrane region" description="Helical" evidence="3">
    <location>
        <begin position="798"/>
        <end position="819"/>
    </location>
</feature>
<feature type="topological domain" description="Cytoplasmic" evidence="3">
    <location>
        <begin position="820"/>
        <end position="873"/>
    </location>
</feature>
<feature type="domain" description="LDL-receptor class A 1" evidence="5">
    <location>
        <begin position="31"/>
        <end position="69"/>
    </location>
</feature>
<feature type="domain" description="LDL-receptor class A 2" evidence="5">
    <location>
        <begin position="70"/>
        <end position="110"/>
    </location>
</feature>
<feature type="domain" description="LDL-receptor class A 3" evidence="5">
    <location>
        <begin position="111"/>
        <end position="151"/>
    </location>
</feature>
<feature type="domain" description="LDL-receptor class A 4" evidence="5">
    <location>
        <begin position="152"/>
        <end position="190"/>
    </location>
</feature>
<feature type="domain" description="LDL-receptor class A 5" evidence="5">
    <location>
        <begin position="191"/>
        <end position="231"/>
    </location>
</feature>
<feature type="domain" description="LDL-receptor class A 6" evidence="5">
    <location>
        <begin position="237"/>
        <end position="275"/>
    </location>
</feature>
<feature type="domain" description="LDL-receptor class A 7" evidence="5">
    <location>
        <begin position="276"/>
        <end position="314"/>
    </location>
</feature>
<feature type="domain" description="LDL-receptor class A 8" evidence="5">
    <location>
        <begin position="316"/>
        <end position="355"/>
    </location>
</feature>
<feature type="domain" description="EGF-like 1" evidence="4">
    <location>
        <begin position="356"/>
        <end position="395"/>
    </location>
</feature>
<feature type="domain" description="EGF-like 2; calcium-binding" evidence="4">
    <location>
        <begin position="396"/>
        <end position="435"/>
    </location>
</feature>
<feature type="repeat" description="LDL-receptor class B 1">
    <location>
        <begin position="439"/>
        <end position="480"/>
    </location>
</feature>
<feature type="repeat" description="LDL-receptor class B 2">
    <location>
        <begin position="481"/>
        <end position="524"/>
    </location>
</feature>
<feature type="repeat" description="LDL-receptor class B 3">
    <location>
        <begin position="525"/>
        <end position="567"/>
    </location>
</feature>
<feature type="repeat" description="LDL-receptor class B 4">
    <location>
        <begin position="568"/>
        <end position="611"/>
    </location>
</feature>
<feature type="repeat" description="LDL-receptor class B 5">
    <location>
        <begin position="612"/>
        <end position="654"/>
    </location>
</feature>
<feature type="repeat" description="LDL-receptor class B 6">
    <location>
        <begin position="655"/>
        <end position="697"/>
    </location>
</feature>
<feature type="domain" description="EGF-like 3" evidence="4">
    <location>
        <begin position="702"/>
        <end position="750"/>
    </location>
</feature>
<feature type="region of interest" description="(Microbial infection) Interaction with Semliki virus spike glycoprotein E1" evidence="17">
    <location>
        <begin position="117"/>
        <end position="139"/>
    </location>
</feature>
<feature type="region of interest" description="Clustered O-linked oligosaccharides">
    <location>
        <begin position="751"/>
        <end position="790"/>
    </location>
</feature>
<feature type="short sequence motif" description="Endocytosis signal" evidence="3">
    <location>
        <begin position="832"/>
        <end position="837"/>
    </location>
</feature>
<feature type="glycosylation site" description="N-linked (GlcNAc...) asparagine" evidence="3">
    <location>
        <position position="151"/>
    </location>
</feature>
<feature type="glycosylation site" description="N-linked (GlcNAc...) asparagine" evidence="3">
    <location>
        <position position="765"/>
    </location>
</feature>
<feature type="glycosylation site" description="N-linked (GlcNAc...) asparagine" evidence="3">
    <location>
        <position position="781"/>
    </location>
</feature>
<feature type="disulfide bond" evidence="1">
    <location>
        <begin position="33"/>
        <end position="45"/>
    </location>
</feature>
<feature type="disulfide bond" evidence="1">
    <location>
        <begin position="40"/>
        <end position="58"/>
    </location>
</feature>
<feature type="disulfide bond" evidence="1">
    <location>
        <begin position="52"/>
        <end position="67"/>
    </location>
</feature>
<feature type="disulfide bond" evidence="1">
    <location>
        <begin position="72"/>
        <end position="84"/>
    </location>
</feature>
<feature type="disulfide bond" evidence="1">
    <location>
        <begin position="79"/>
        <end position="97"/>
    </location>
</feature>
<feature type="disulfide bond" evidence="1">
    <location>
        <begin position="91"/>
        <end position="108"/>
    </location>
</feature>
<feature type="disulfide bond">
    <location>
        <begin position="113"/>
        <end position="127"/>
    </location>
</feature>
<feature type="disulfide bond">
    <location>
        <begin position="120"/>
        <end position="140"/>
    </location>
</feature>
<feature type="disulfide bond">
    <location>
        <begin position="134"/>
        <end position="149"/>
    </location>
</feature>
<feature type="disulfide bond" evidence="1">
    <location>
        <begin position="154"/>
        <end position="166"/>
    </location>
</feature>
<feature type="disulfide bond" evidence="1">
    <location>
        <begin position="161"/>
        <end position="179"/>
    </location>
</feature>
<feature type="disulfide bond" evidence="1">
    <location>
        <begin position="173"/>
        <end position="188"/>
    </location>
</feature>
<feature type="disulfide bond" evidence="1">
    <location>
        <begin position="193"/>
        <end position="205"/>
    </location>
</feature>
<feature type="disulfide bond" evidence="1">
    <location>
        <begin position="200"/>
        <end position="218"/>
    </location>
</feature>
<feature type="disulfide bond" evidence="1">
    <location>
        <begin position="212"/>
        <end position="229"/>
    </location>
</feature>
<feature type="disulfide bond" evidence="1">
    <location>
        <begin position="239"/>
        <end position="251"/>
    </location>
</feature>
<feature type="disulfide bond" evidence="1">
    <location>
        <begin position="246"/>
        <end position="264"/>
    </location>
</feature>
<feature type="disulfide bond" evidence="1">
    <location>
        <begin position="258"/>
        <end position="273"/>
    </location>
</feature>
<feature type="disulfide bond" evidence="1">
    <location>
        <begin position="278"/>
        <end position="290"/>
    </location>
</feature>
<feature type="disulfide bond" evidence="1">
    <location>
        <begin position="285"/>
        <end position="303"/>
    </location>
</feature>
<feature type="disulfide bond" evidence="1">
    <location>
        <begin position="297"/>
        <end position="312"/>
    </location>
</feature>
<feature type="disulfide bond" evidence="1">
    <location>
        <begin position="318"/>
        <end position="331"/>
    </location>
</feature>
<feature type="disulfide bond" evidence="1">
    <location>
        <begin position="326"/>
        <end position="344"/>
    </location>
</feature>
<feature type="disulfide bond" evidence="1">
    <location>
        <begin position="338"/>
        <end position="355"/>
    </location>
</feature>
<feature type="disulfide bond" evidence="1">
    <location>
        <begin position="360"/>
        <end position="371"/>
    </location>
</feature>
<feature type="disulfide bond" evidence="1">
    <location>
        <begin position="367"/>
        <end position="380"/>
    </location>
</feature>
<feature type="disulfide bond" evidence="1">
    <location>
        <begin position="382"/>
        <end position="394"/>
    </location>
</feature>
<feature type="disulfide bond" evidence="1">
    <location>
        <begin position="400"/>
        <end position="410"/>
    </location>
</feature>
<feature type="disulfide bond" evidence="1">
    <location>
        <begin position="406"/>
        <end position="419"/>
    </location>
</feature>
<feature type="disulfide bond" evidence="1">
    <location>
        <begin position="421"/>
        <end position="434"/>
    </location>
</feature>
<feature type="disulfide bond" evidence="1">
    <location>
        <begin position="706"/>
        <end position="719"/>
    </location>
</feature>
<feature type="disulfide bond" evidence="1">
    <location>
        <begin position="715"/>
        <end position="734"/>
    </location>
</feature>
<feature type="disulfide bond" evidence="1">
    <location>
        <begin position="736"/>
        <end position="749"/>
    </location>
</feature>
<feature type="cross-link" description="Glycyl lysine isopeptide (Lys-Gly) (interchain with G-Cter in ubiquitin)" evidence="12">
    <location>
        <position position="839"/>
    </location>
</feature>
<feature type="splice variant" id="VSP_004304" description="In isoform Short." evidence="21">
    <original>STATTVTYSETKDTNTTEISATSGLVPGG</original>
    <variation>R</variation>
    <location>
        <begin position="751"/>
        <end position="779"/>
    </location>
</feature>
<feature type="sequence variant" id="VAR_011865" description="In dbSNP:rs6149." evidence="6 20">
    <original>V</original>
    <variation>I</variation>
    <location>
        <position position="59"/>
    </location>
</feature>
<feature type="sequence variant" id="VAR_025063" description="In dbSNP:rs34761707." evidence="20">
    <original>P</original>
    <variation>H</variation>
    <location>
        <position position="262"/>
    </location>
</feature>
<feature type="sequence variant" id="VAR_011866" description="In dbSNP:rs6146." evidence="6">
    <original>E</original>
    <variation>K</variation>
    <location>
        <position position="379"/>
    </location>
</feature>
<feature type="sequence variant" id="VAR_025064" description="In dbSNP:rs34753566." evidence="20">
    <original>L</original>
    <variation>I</variation>
    <location>
        <position position="464"/>
    </location>
</feature>
<feature type="sequence variant" id="VAR_025065" description="In dbSNP:rs35724190." evidence="20">
    <original>I</original>
    <variation>V</variation>
    <location>
        <position position="561"/>
    </location>
</feature>
<feature type="sequence variant" id="VAR_025066" description="In dbSNP:rs35948251." evidence="20">
    <original>R</original>
    <variation>H</variation>
    <location>
        <position position="613"/>
    </location>
</feature>
<feature type="sequence variant" id="VAR_025067" description="In dbSNP:rs35334949." evidence="20">
    <original>V</original>
    <variation>I</variation>
    <location>
        <position position="791"/>
    </location>
</feature>
<feature type="mutagenesis site" description="Complete loss of entry of Semliki virus into the cell." evidence="19">
    <original>W</original>
    <variation>F</variation>
    <variation>R</variation>
    <location>
        <position position="89"/>
    </location>
</feature>
<feature type="mutagenesis site" description="Complete loss of entry of Semliki virus into the cell." evidence="19">
    <original>D</original>
    <variation>A</variation>
    <location>
        <position position="92"/>
    </location>
</feature>
<feature type="mutagenesis site" description="Complete loss of entry of Semliki virus into the cell." evidence="19">
    <original>D</original>
    <variation>I</variation>
    <location>
        <position position="94"/>
    </location>
</feature>
<feature type="mutagenesis site" description="Complete loss of entry of Semliki virus into the cell." evidence="19">
    <original>D</original>
    <variation>A</variation>
    <location>
        <position position="96"/>
    </location>
</feature>
<feature type="mutagenesis site" description="Complete loss of interaction with Semliki virus spike glycoprotein E1." evidence="17">
    <original>E</original>
    <variation>A</variation>
    <location>
        <position position="117"/>
    </location>
</feature>
<feature type="mutagenesis site" description="Complete loss of interaction with Semliki virus spike glycoprotein E1." evidence="17">
    <original>P</original>
    <variation>A</variation>
    <variation>H</variation>
    <location>
        <position position="129"/>
    </location>
</feature>
<feature type="mutagenesis site" description="Complete loss of interaction with Semliki virus spike glycoprotein E1." evidence="17">
    <original>W</original>
    <variation>A</variation>
    <location>
        <position position="132"/>
    </location>
</feature>
<feature type="mutagenesis site" description="Complete loss of interaction with Semliki virus spike glycoprotein E1." evidence="17">
    <original>D</original>
    <variation>A</variation>
    <location>
        <position position="135"/>
    </location>
</feature>
<feature type="mutagenesis site" description="Complete loss of interaction with Semliki virus spike glycoprotein E1." evidence="17">
    <original>E</original>
    <variation>A</variation>
    <location>
        <position position="137"/>
    </location>
</feature>
<feature type="mutagenesis site" description="Complete loss of interaction with Semliki virus spike glycoprotein E1." evidence="17">
    <original>D</original>
    <variation>A</variation>
    <location>
        <position position="139"/>
    </location>
</feature>
<feature type="mutagenesis site" description="Insensitive to MYLIP-triggered degradation; when associated with R-828 and R-839." evidence="12">
    <original>K</original>
    <variation>R</variation>
    <location>
        <position position="825"/>
    </location>
</feature>
<feature type="mutagenesis site" description="Insensitive to MYLIP-triggered degradation; when associated with R-825 and R-839." evidence="12">
    <original>K</original>
    <variation>R</variation>
    <location>
        <position position="828"/>
    </location>
</feature>
<feature type="mutagenesis site" description="Insensitive to MYLIP-triggered degradation. Insensitive to MYLIP-triggered degradation; when associated with R-825 and R-828." evidence="12">
    <original>K</original>
    <variation>R</variation>
    <location>
        <position position="839"/>
    </location>
</feature>
<feature type="sequence conflict" description="In Ref. 1; AAA53684." evidence="21" ref="1">
    <original>L</original>
    <variation>V</variation>
    <location>
        <position position="9"/>
    </location>
</feature>
<feature type="sequence conflict" description="In Ref. 4; AAA61344." evidence="21" ref="4">
    <original>L</original>
    <variation>V</variation>
    <location>
        <position position="13"/>
    </location>
</feature>
<feature type="sequence conflict" description="In Ref. 1; AAA53684." evidence="21" ref="1">
    <original>G</original>
    <variation>A</variation>
    <location>
        <position position="424"/>
    </location>
</feature>
<feature type="sequence conflict" description="In Ref. 1; AAA53684." evidence="21" ref="1">
    <original>L</original>
    <variation>H</variation>
    <location>
        <position position="678"/>
    </location>
</feature>
<feature type="sequence conflict" description="In Ref. 4; AAA61344." evidence="21" ref="4">
    <original>T</original>
    <variation>S</variation>
    <location>
        <position position="766"/>
    </location>
</feature>
<feature type="helix" evidence="27">
    <location>
        <begin position="87"/>
        <end position="89"/>
    </location>
</feature>
<feature type="strand" evidence="27">
    <location>
        <begin position="90"/>
        <end position="93"/>
    </location>
</feature>
<feature type="helix" evidence="27">
    <location>
        <begin position="101"/>
        <end position="103"/>
    </location>
</feature>
<feature type="turn" evidence="27">
    <location>
        <begin position="105"/>
        <end position="107"/>
    </location>
</feature>
<feature type="turn" evidence="26">
    <location>
        <begin position="115"/>
        <end position="117"/>
    </location>
</feature>
<feature type="strand" evidence="26">
    <location>
        <begin position="121"/>
        <end position="125"/>
    </location>
</feature>
<feature type="strand" evidence="26">
    <location>
        <begin position="132"/>
        <end position="137"/>
    </location>
</feature>
<feature type="turn" evidence="26">
    <location>
        <begin position="141"/>
        <end position="145"/>
    </location>
</feature>
<feature type="strand" evidence="27">
    <location>
        <begin position="158"/>
        <end position="160"/>
    </location>
</feature>
<feature type="helix" evidence="27">
    <location>
        <begin position="169"/>
        <end position="171"/>
    </location>
</feature>
<feature type="strand" evidence="27">
    <location>
        <begin position="174"/>
        <end position="176"/>
    </location>
</feature>
<feature type="strand" evidence="27">
    <location>
        <begin position="179"/>
        <end position="182"/>
    </location>
</feature>
<feature type="helix" evidence="27">
    <location>
        <begin position="183"/>
        <end position="185"/>
    </location>
</feature>
<comment type="function">
    <text evidence="2 14 15">Multifunctional cell surface receptor that binds VLDL and transports it into cells by endocytosis and therefore plays an important role in energy metabolism. Also binds to a wide range of other molecules including Reelin/RELN or apolipoprotein E/APOE-containing ligands as well as clusterin/CLU (PubMed:24381170, PubMed:30873003). In the off-state of the pathway, forms homooligomers or heterooligomers with LRP8 (PubMed:30873003). Upon binding to ligands, homooligomers are rearranged to higher order receptor clusters that transmit the extracellular RELN signal to intracellular signaling processes by binding to DAB1 (PubMed:30873003). This interaction results in phosphorylation of DAB1 leading to the ultimate cell responses required for the correct positioning of newly generated neurons. Later, mediates a stop signal for migrating neurons, preventing them from entering the marginal zone (By similarity).</text>
</comment>
<comment type="function">
    <text evidence="16">(Microbial infection) Acts as a receptor for Semliki Forest virus.</text>
</comment>
<comment type="subunit">
    <text evidence="2 8 10 11 13 15">Homooligomer (PubMed:30873003). Binds to the extracellular matrix protein Reelin/RELN (PubMed:30873003). Interacts with LRP8 (PubMed:30873003). Interacts with LDLRAP1 (By similarity). Interacts with SNX17 (By similarity). Interacts with DAB1. Interacts with PCSK9. Interacts with PAFAH1B3 and PAFAH1B2, the catalytic complex of (PAF-AH (I)) heterotetrameric enzyme; these interactions may modulate the Reelin pathway (PubMed:17330141). Interacts with STX5; this interaction mediates VLDLR translocation from the endoplasmic reticulum to the plasma membrane (PubMed:23701949). Interacts with CLU (PubMed:24381170).</text>
</comment>
<comment type="subunit">
    <text evidence="7">(Microbial infection) Interacts with protein VP1 of the minor-group human rhinoviruses (HRVs) through the second and third LDL-receptor class A domains.</text>
</comment>
<comment type="subunit">
    <text evidence="17 22">(Microbial infection) Interacts (via class A repeats) with Semliki Forest virus spike glycoprotein E1 (via DIII); this interaction mediates viral entry into host cell.</text>
</comment>
<comment type="subunit">
    <text evidence="18 19">(Microbial infection) Interacts (via class A repeats) with Eastern equine encephalitis virus spike glycoprotein E2 (via E2-A); this interaction mediates viral entry into host cell.</text>
</comment>
<comment type="interaction">
    <interactant intactId="EBI-9004309">
        <id>P98155</id>
    </interactant>
    <interactant intactId="EBI-715927">
        <id>P30533</id>
        <label>LRPAP1</label>
    </interactant>
    <organismsDiffer>false</organismsDiffer>
    <experiments>6</experiments>
</comment>
<comment type="interaction">
    <interactant intactId="EBI-9004309">
        <id>P98155</id>
    </interactant>
    <interactant intactId="EBI-919734">
        <id>Q99068</id>
        <label>Lrpap1</label>
    </interactant>
    <organismsDiffer>true</organismsDiffer>
    <experiments>2</experiments>
</comment>
<comment type="interaction">
    <interactant intactId="EBI-9004309">
        <id>P98155</id>
    </interactant>
    <interactant intactId="EBI-9248666">
        <id>Q60841</id>
        <label>Reln</label>
    </interactant>
    <organismsDiffer>true</organismsDiffer>
    <experiments>7</experiments>
</comment>
<comment type="interaction">
    <interactant intactId="EBI-12047495">
        <id>P98155-2</id>
    </interactant>
    <interactant intactId="EBI-1210440">
        <id>O43309</id>
        <label>ZSCAN12</label>
    </interactant>
    <organismsDiffer>false</organismsDiffer>
    <experiments>3</experiments>
</comment>
<comment type="subcellular location">
    <subcellularLocation>
        <location evidence="13 16">Cell membrane</location>
        <topology>Single-pass type I membrane protein</topology>
    </subcellularLocation>
    <subcellularLocation>
        <location>Membrane</location>
        <location>Clathrin-coated pit</location>
        <topology>Single-pass type I membrane protein</topology>
    </subcellularLocation>
</comment>
<comment type="alternative products">
    <event type="alternative splicing"/>
    <isoform>
        <id>P98155-1</id>
        <name>Long</name>
        <sequence type="displayed"/>
    </isoform>
    <isoform>
        <id>P98155-2</id>
        <name>Short</name>
        <sequence type="described" ref="VSP_004304"/>
    </isoform>
</comment>
<comment type="tissue specificity">
    <text>Abundant in heart and skeletal muscle; also ovary and kidney; not in liver.</text>
</comment>
<comment type="PTM">
    <text evidence="12">Ubiquitinated at Lys-839 by MYLIP leading to degradation.</text>
</comment>
<comment type="PTM">
    <text evidence="13">Glycosylated.</text>
</comment>
<comment type="disease" evidence="9">
    <disease id="DI-02742">
        <name>Cerebellar ataxia, impaired intellectual development, and dysequilibrium syndrome 1</name>
        <acronym>CAMRQ1</acronym>
        <description>An autosomal recessive, congenital, non-progressive cerebellar ataxia associated with disturbed equilibrium, delayed ambulation, intellectual disability, cerebellar hypoplasia and mild cerebral gyral simplification. Additional features include short stature, strabismus, pes planus and, rarely, seizures.</description>
        <dbReference type="MIM" id="224050"/>
    </disease>
    <text>The disease is caused by variants affecting the gene represented in this entry.</text>
</comment>
<gene>
    <name type="primary">VLDLR</name>
</gene>
<name>VLDLR_HUMAN</name>
<protein>
    <recommendedName>
        <fullName>Very low-density lipoprotein receptor</fullName>
        <shortName>VLDL receptor</shortName>
        <shortName>VLDL-R</shortName>
    </recommendedName>
</protein>
<proteinExistence type="evidence at protein level"/>